<accession>Q2KW47</accession>
<reference key="1">
    <citation type="journal article" date="2006" name="J. Bacteriol.">
        <title>Comparison of the genome sequence of the poultry pathogen Bordetella avium with those of B. bronchiseptica, B. pertussis, and B. parapertussis reveals extensive diversity in surface structures associated with host interaction.</title>
        <authorList>
            <person name="Sebaihia M."/>
            <person name="Preston A."/>
            <person name="Maskell D.J."/>
            <person name="Kuzmiak H."/>
            <person name="Connell T.D."/>
            <person name="King N.D."/>
            <person name="Orndorff P.E."/>
            <person name="Miyamoto D.M."/>
            <person name="Thomson N.R."/>
            <person name="Harris D."/>
            <person name="Goble A."/>
            <person name="Lord A."/>
            <person name="Murphy L."/>
            <person name="Quail M.A."/>
            <person name="Rutter S."/>
            <person name="Squares R."/>
            <person name="Squares S."/>
            <person name="Woodward J."/>
            <person name="Parkhill J."/>
            <person name="Temple L.M."/>
        </authorList>
    </citation>
    <scope>NUCLEOTIDE SEQUENCE [LARGE SCALE GENOMIC DNA]</scope>
    <source>
        <strain>197N</strain>
    </source>
</reference>
<protein>
    <recommendedName>
        <fullName evidence="1">Leucyl/phenylalanyl-tRNA--protein transferase</fullName>
        <ecNumber evidence="1">2.3.2.6</ecNumber>
    </recommendedName>
    <alternativeName>
        <fullName evidence="1">L/F-transferase</fullName>
    </alternativeName>
    <alternativeName>
        <fullName evidence="1">Leucyltransferase</fullName>
    </alternativeName>
    <alternativeName>
        <fullName evidence="1">Phenyalanyltransferase</fullName>
    </alternativeName>
</protein>
<dbReference type="EC" id="2.3.2.6" evidence="1"/>
<dbReference type="EMBL" id="AM167904">
    <property type="protein sequence ID" value="CAJ50362.1"/>
    <property type="molecule type" value="Genomic_DNA"/>
</dbReference>
<dbReference type="RefSeq" id="WP_012418393.1">
    <property type="nucleotide sequence ID" value="NC_010645.1"/>
</dbReference>
<dbReference type="SMR" id="Q2KW47"/>
<dbReference type="STRING" id="360910.BAV2751"/>
<dbReference type="GeneID" id="92934002"/>
<dbReference type="KEGG" id="bav:BAV2751"/>
<dbReference type="eggNOG" id="COG2360">
    <property type="taxonomic scope" value="Bacteria"/>
</dbReference>
<dbReference type="HOGENOM" id="CLU_075045_0_0_4"/>
<dbReference type="OrthoDB" id="9790282at2"/>
<dbReference type="Proteomes" id="UP000001977">
    <property type="component" value="Chromosome"/>
</dbReference>
<dbReference type="GO" id="GO:0005737">
    <property type="term" value="C:cytoplasm"/>
    <property type="evidence" value="ECO:0007669"/>
    <property type="project" value="UniProtKB-SubCell"/>
</dbReference>
<dbReference type="GO" id="GO:0008914">
    <property type="term" value="F:leucyl-tRNA--protein transferase activity"/>
    <property type="evidence" value="ECO:0007669"/>
    <property type="project" value="UniProtKB-UniRule"/>
</dbReference>
<dbReference type="GO" id="GO:0030163">
    <property type="term" value="P:protein catabolic process"/>
    <property type="evidence" value="ECO:0007669"/>
    <property type="project" value="UniProtKB-UniRule"/>
</dbReference>
<dbReference type="FunFam" id="3.30.70.3550:FF:000001">
    <property type="entry name" value="Leucyl/phenylalanyl-tRNA--protein transferase"/>
    <property type="match status" value="1"/>
</dbReference>
<dbReference type="Gene3D" id="3.40.630.70">
    <property type="entry name" value="Leucyl/phenylalanyl-tRNA-protein transferase, C-terminal domain"/>
    <property type="match status" value="1"/>
</dbReference>
<dbReference type="Gene3D" id="3.30.70.3550">
    <property type="entry name" value="Leucyl/phenylalanyl-tRNA-protein transferase, N-terminal domain"/>
    <property type="match status" value="1"/>
</dbReference>
<dbReference type="HAMAP" id="MF_00688">
    <property type="entry name" value="Leu_Phe_trans"/>
    <property type="match status" value="1"/>
</dbReference>
<dbReference type="InterPro" id="IPR016181">
    <property type="entry name" value="Acyl_CoA_acyltransferase"/>
</dbReference>
<dbReference type="InterPro" id="IPR004616">
    <property type="entry name" value="Leu/Phe-tRNA_Trfase"/>
</dbReference>
<dbReference type="InterPro" id="IPR042203">
    <property type="entry name" value="Leu/Phe-tRNA_Trfase_C"/>
</dbReference>
<dbReference type="InterPro" id="IPR042221">
    <property type="entry name" value="Leu/Phe-tRNA_Trfase_N"/>
</dbReference>
<dbReference type="NCBIfam" id="TIGR00667">
    <property type="entry name" value="aat"/>
    <property type="match status" value="1"/>
</dbReference>
<dbReference type="PANTHER" id="PTHR30098">
    <property type="entry name" value="LEUCYL/PHENYLALANYL-TRNA--PROTEIN TRANSFERASE"/>
    <property type="match status" value="1"/>
</dbReference>
<dbReference type="PANTHER" id="PTHR30098:SF2">
    <property type="entry name" value="LEUCYL_PHENYLALANYL-TRNA--PROTEIN TRANSFERASE"/>
    <property type="match status" value="1"/>
</dbReference>
<dbReference type="Pfam" id="PF03588">
    <property type="entry name" value="Leu_Phe_trans"/>
    <property type="match status" value="1"/>
</dbReference>
<dbReference type="SUPFAM" id="SSF55729">
    <property type="entry name" value="Acyl-CoA N-acyltransferases (Nat)"/>
    <property type="match status" value="1"/>
</dbReference>
<gene>
    <name evidence="1" type="primary">aat</name>
    <name type="ordered locus">BAV2751</name>
</gene>
<organism>
    <name type="scientific">Bordetella avium (strain 197N)</name>
    <dbReference type="NCBI Taxonomy" id="360910"/>
    <lineage>
        <taxon>Bacteria</taxon>
        <taxon>Pseudomonadati</taxon>
        <taxon>Pseudomonadota</taxon>
        <taxon>Betaproteobacteria</taxon>
        <taxon>Burkholderiales</taxon>
        <taxon>Alcaligenaceae</taxon>
        <taxon>Bordetella</taxon>
    </lineage>
</organism>
<feature type="chain" id="PRO_0000258045" description="Leucyl/phenylalanyl-tRNA--protein transferase">
    <location>
        <begin position="1"/>
        <end position="250"/>
    </location>
</feature>
<comment type="function">
    <text evidence="1">Functions in the N-end rule pathway of protein degradation where it conjugates Leu, Phe and, less efficiently, Met from aminoacyl-tRNAs to the N-termini of proteins containing an N-terminal arginine or lysine.</text>
</comment>
<comment type="catalytic activity">
    <reaction evidence="1">
        <text>N-terminal L-lysyl-[protein] + L-leucyl-tRNA(Leu) = N-terminal L-leucyl-L-lysyl-[protein] + tRNA(Leu) + H(+)</text>
        <dbReference type="Rhea" id="RHEA:12340"/>
        <dbReference type="Rhea" id="RHEA-COMP:9613"/>
        <dbReference type="Rhea" id="RHEA-COMP:9622"/>
        <dbReference type="Rhea" id="RHEA-COMP:12670"/>
        <dbReference type="Rhea" id="RHEA-COMP:12671"/>
        <dbReference type="ChEBI" id="CHEBI:15378"/>
        <dbReference type="ChEBI" id="CHEBI:65249"/>
        <dbReference type="ChEBI" id="CHEBI:78442"/>
        <dbReference type="ChEBI" id="CHEBI:78494"/>
        <dbReference type="ChEBI" id="CHEBI:133043"/>
        <dbReference type="EC" id="2.3.2.6"/>
    </reaction>
</comment>
<comment type="catalytic activity">
    <reaction evidence="1">
        <text>N-terminal L-arginyl-[protein] + L-leucyl-tRNA(Leu) = N-terminal L-leucyl-L-arginyl-[protein] + tRNA(Leu) + H(+)</text>
        <dbReference type="Rhea" id="RHEA:50416"/>
        <dbReference type="Rhea" id="RHEA-COMP:9613"/>
        <dbReference type="Rhea" id="RHEA-COMP:9622"/>
        <dbReference type="Rhea" id="RHEA-COMP:12672"/>
        <dbReference type="Rhea" id="RHEA-COMP:12673"/>
        <dbReference type="ChEBI" id="CHEBI:15378"/>
        <dbReference type="ChEBI" id="CHEBI:64719"/>
        <dbReference type="ChEBI" id="CHEBI:78442"/>
        <dbReference type="ChEBI" id="CHEBI:78494"/>
        <dbReference type="ChEBI" id="CHEBI:133044"/>
        <dbReference type="EC" id="2.3.2.6"/>
    </reaction>
</comment>
<comment type="catalytic activity">
    <reaction evidence="1">
        <text>L-phenylalanyl-tRNA(Phe) + an N-terminal L-alpha-aminoacyl-[protein] = an N-terminal L-phenylalanyl-L-alpha-aminoacyl-[protein] + tRNA(Phe)</text>
        <dbReference type="Rhea" id="RHEA:43632"/>
        <dbReference type="Rhea" id="RHEA-COMP:9668"/>
        <dbReference type="Rhea" id="RHEA-COMP:9699"/>
        <dbReference type="Rhea" id="RHEA-COMP:10636"/>
        <dbReference type="Rhea" id="RHEA-COMP:10637"/>
        <dbReference type="ChEBI" id="CHEBI:78442"/>
        <dbReference type="ChEBI" id="CHEBI:78531"/>
        <dbReference type="ChEBI" id="CHEBI:78597"/>
        <dbReference type="ChEBI" id="CHEBI:83561"/>
        <dbReference type="EC" id="2.3.2.6"/>
    </reaction>
</comment>
<comment type="subcellular location">
    <subcellularLocation>
        <location evidence="1">Cytoplasm</location>
    </subcellularLocation>
</comment>
<comment type="similarity">
    <text evidence="1">Belongs to the L/F-transferase family.</text>
</comment>
<evidence type="ECO:0000255" key="1">
    <source>
        <dbReference type="HAMAP-Rule" id="MF_00688"/>
    </source>
</evidence>
<sequence>MRIPWLEADTPFPPAEQALKEPNGLLAAGGELNTDRLRAAYAKGIFPWYSEGEPLLWWSPDPRMVLACADFAPSHSLRKTLRRLARAEQAGDTRIQVRVDTAFARVMAACAGRRDGQAGTWITPEVQAAYCAWHEQGQAHSIETWIDDHLVGGLYGISLGGMFFGESMFAHATDASKIALAYLVAFLTRHEVDWIDCQQQTRHLASLGARPLPRAQFLQHVARVLAKPAPPWRVGVLRHAGDIVDSANQR</sequence>
<name>LFTR_BORA1</name>
<keyword id="KW-0012">Acyltransferase</keyword>
<keyword id="KW-0963">Cytoplasm</keyword>
<keyword id="KW-1185">Reference proteome</keyword>
<keyword id="KW-0808">Transferase</keyword>
<proteinExistence type="inferred from homology"/>